<organism>
    <name type="scientific">Burkholderia pseudomallei (strain 1106a)</name>
    <dbReference type="NCBI Taxonomy" id="357348"/>
    <lineage>
        <taxon>Bacteria</taxon>
        <taxon>Pseudomonadati</taxon>
        <taxon>Pseudomonadota</taxon>
        <taxon>Betaproteobacteria</taxon>
        <taxon>Burkholderiales</taxon>
        <taxon>Burkholderiaceae</taxon>
        <taxon>Burkholderia</taxon>
        <taxon>pseudomallei group</taxon>
    </lineage>
</organism>
<comment type="function">
    <text evidence="1">Functions in the N-end rule pathway of protein degradation where it conjugates Leu from its aminoacyl-tRNA to the N-termini of proteins containing an N-terminal aspartate or glutamate.</text>
</comment>
<comment type="catalytic activity">
    <reaction evidence="1">
        <text>N-terminal L-glutamyl-[protein] + L-leucyl-tRNA(Leu) = N-terminal L-leucyl-L-glutamyl-[protein] + tRNA(Leu) + H(+)</text>
        <dbReference type="Rhea" id="RHEA:50412"/>
        <dbReference type="Rhea" id="RHEA-COMP:9613"/>
        <dbReference type="Rhea" id="RHEA-COMP:9622"/>
        <dbReference type="Rhea" id="RHEA-COMP:12664"/>
        <dbReference type="Rhea" id="RHEA-COMP:12668"/>
        <dbReference type="ChEBI" id="CHEBI:15378"/>
        <dbReference type="ChEBI" id="CHEBI:64721"/>
        <dbReference type="ChEBI" id="CHEBI:78442"/>
        <dbReference type="ChEBI" id="CHEBI:78494"/>
        <dbReference type="ChEBI" id="CHEBI:133041"/>
        <dbReference type="EC" id="2.3.2.29"/>
    </reaction>
</comment>
<comment type="catalytic activity">
    <reaction evidence="1">
        <text>N-terminal L-aspartyl-[protein] + L-leucyl-tRNA(Leu) = N-terminal L-leucyl-L-aspartyl-[protein] + tRNA(Leu) + H(+)</text>
        <dbReference type="Rhea" id="RHEA:50420"/>
        <dbReference type="Rhea" id="RHEA-COMP:9613"/>
        <dbReference type="Rhea" id="RHEA-COMP:9622"/>
        <dbReference type="Rhea" id="RHEA-COMP:12669"/>
        <dbReference type="Rhea" id="RHEA-COMP:12674"/>
        <dbReference type="ChEBI" id="CHEBI:15378"/>
        <dbReference type="ChEBI" id="CHEBI:64720"/>
        <dbReference type="ChEBI" id="CHEBI:78442"/>
        <dbReference type="ChEBI" id="CHEBI:78494"/>
        <dbReference type="ChEBI" id="CHEBI:133042"/>
        <dbReference type="EC" id="2.3.2.29"/>
    </reaction>
</comment>
<comment type="subcellular location">
    <subcellularLocation>
        <location evidence="1">Cytoplasm</location>
    </subcellularLocation>
</comment>
<comment type="similarity">
    <text evidence="1">Belongs to the R-transferase family. Bpt subfamily.</text>
</comment>
<evidence type="ECO:0000255" key="1">
    <source>
        <dbReference type="HAMAP-Rule" id="MF_00689"/>
    </source>
</evidence>
<protein>
    <recommendedName>
        <fullName evidence="1">Aspartate/glutamate leucyltransferase</fullName>
        <ecNumber evidence="1">2.3.2.29</ecNumber>
    </recommendedName>
</protein>
<keyword id="KW-0012">Acyltransferase</keyword>
<keyword id="KW-0963">Cytoplasm</keyword>
<keyword id="KW-0808">Transferase</keyword>
<gene>
    <name evidence="1" type="primary">bpt</name>
    <name type="ordered locus">BURPS1106A_1826</name>
</gene>
<dbReference type="EC" id="2.3.2.29" evidence="1"/>
<dbReference type="EMBL" id="CP000572">
    <property type="protein sequence ID" value="ABN89820.1"/>
    <property type="molecule type" value="Genomic_DNA"/>
</dbReference>
<dbReference type="RefSeq" id="WP_004192823.1">
    <property type="nucleotide sequence ID" value="NC_009076.1"/>
</dbReference>
<dbReference type="SMR" id="A3NUS2"/>
<dbReference type="KEGG" id="bpl:BURPS1106A_1826"/>
<dbReference type="HOGENOM" id="CLU_077607_0_0_4"/>
<dbReference type="Proteomes" id="UP000006738">
    <property type="component" value="Chromosome I"/>
</dbReference>
<dbReference type="GO" id="GO:0005737">
    <property type="term" value="C:cytoplasm"/>
    <property type="evidence" value="ECO:0007669"/>
    <property type="project" value="UniProtKB-SubCell"/>
</dbReference>
<dbReference type="GO" id="GO:0004057">
    <property type="term" value="F:arginyl-tRNA--protein transferase activity"/>
    <property type="evidence" value="ECO:0007669"/>
    <property type="project" value="InterPro"/>
</dbReference>
<dbReference type="GO" id="GO:0008914">
    <property type="term" value="F:leucyl-tRNA--protein transferase activity"/>
    <property type="evidence" value="ECO:0007669"/>
    <property type="project" value="UniProtKB-UniRule"/>
</dbReference>
<dbReference type="GO" id="GO:0071596">
    <property type="term" value="P:ubiquitin-dependent protein catabolic process via the N-end rule pathway"/>
    <property type="evidence" value="ECO:0007669"/>
    <property type="project" value="InterPro"/>
</dbReference>
<dbReference type="HAMAP" id="MF_00689">
    <property type="entry name" value="Bpt"/>
    <property type="match status" value="1"/>
</dbReference>
<dbReference type="InterPro" id="IPR016181">
    <property type="entry name" value="Acyl_CoA_acyltransferase"/>
</dbReference>
<dbReference type="InterPro" id="IPR017138">
    <property type="entry name" value="Asp_Glu_LeuTrfase"/>
</dbReference>
<dbReference type="InterPro" id="IPR030700">
    <property type="entry name" value="N-end_Aminoacyl_Trfase"/>
</dbReference>
<dbReference type="InterPro" id="IPR007472">
    <property type="entry name" value="N-end_Aminoacyl_Trfase_C"/>
</dbReference>
<dbReference type="InterPro" id="IPR007471">
    <property type="entry name" value="N-end_Aminoacyl_Trfase_N"/>
</dbReference>
<dbReference type="NCBIfam" id="NF002341">
    <property type="entry name" value="PRK01305.1-1"/>
    <property type="match status" value="1"/>
</dbReference>
<dbReference type="NCBIfam" id="NF002342">
    <property type="entry name" value="PRK01305.1-3"/>
    <property type="match status" value="1"/>
</dbReference>
<dbReference type="NCBIfam" id="NF002346">
    <property type="entry name" value="PRK01305.2-3"/>
    <property type="match status" value="1"/>
</dbReference>
<dbReference type="PANTHER" id="PTHR21367">
    <property type="entry name" value="ARGININE-TRNA-PROTEIN TRANSFERASE 1"/>
    <property type="match status" value="1"/>
</dbReference>
<dbReference type="PANTHER" id="PTHR21367:SF1">
    <property type="entry name" value="ARGINYL-TRNA--PROTEIN TRANSFERASE 1"/>
    <property type="match status" value="1"/>
</dbReference>
<dbReference type="Pfam" id="PF04377">
    <property type="entry name" value="ATE_C"/>
    <property type="match status" value="1"/>
</dbReference>
<dbReference type="Pfam" id="PF04376">
    <property type="entry name" value="ATE_N"/>
    <property type="match status" value="1"/>
</dbReference>
<dbReference type="PIRSF" id="PIRSF037208">
    <property type="entry name" value="ATE_pro_prd"/>
    <property type="match status" value="1"/>
</dbReference>
<dbReference type="SUPFAM" id="SSF55729">
    <property type="entry name" value="Acyl-CoA N-acyltransferases (Nat)"/>
    <property type="match status" value="1"/>
</dbReference>
<proteinExistence type="inferred from homology"/>
<reference key="1">
    <citation type="journal article" date="2010" name="Genome Biol. Evol.">
        <title>Continuing evolution of Burkholderia mallei through genome reduction and large-scale rearrangements.</title>
        <authorList>
            <person name="Losada L."/>
            <person name="Ronning C.M."/>
            <person name="DeShazer D."/>
            <person name="Woods D."/>
            <person name="Fedorova N."/>
            <person name="Kim H.S."/>
            <person name="Shabalina S.A."/>
            <person name="Pearson T.R."/>
            <person name="Brinkac L."/>
            <person name="Tan P."/>
            <person name="Nandi T."/>
            <person name="Crabtree J."/>
            <person name="Badger J."/>
            <person name="Beckstrom-Sternberg S."/>
            <person name="Saqib M."/>
            <person name="Schutzer S.E."/>
            <person name="Keim P."/>
            <person name="Nierman W.C."/>
        </authorList>
    </citation>
    <scope>NUCLEOTIDE SEQUENCE [LARGE SCALE GENOMIC DNA]</scope>
    <source>
        <strain>1106a</strain>
    </source>
</reference>
<name>BPT_BURP0</name>
<feature type="chain" id="PRO_1000045129" description="Aspartate/glutamate leucyltransferase">
    <location>
        <begin position="1"/>
        <end position="276"/>
    </location>
</feature>
<accession>A3NUS2</accession>
<sequence>MTHPTELPLSPLSALQFYATAPYPCSYLDGRVARSQVATPSHLINSDIYTELVKAGFRRSGVFTYRPYCDGCRACVPVRVPVDAFAPNRTQRRTWKRHRALVATVAALHYDEEHYALYMRYQSARHAGGGMDRDSRDQYEQFLLQSRINSRLVEFRDLDPAENGASTLRMVSMIDILGDGLSSVYTFFDPDESHASYGTYNILWQIEQAKSLRLPYVYLGYWIRESPKMAYKANFHPLEGLVDGRWKVLDPTLADLPPVDAALARAPLPGGHSGTR</sequence>